<accession>A5UG95</accession>
<dbReference type="EMBL" id="CP000672">
    <property type="protein sequence ID" value="ABQ99800.1"/>
    <property type="molecule type" value="Genomic_DNA"/>
</dbReference>
<dbReference type="SMR" id="A5UG95"/>
<dbReference type="KEGG" id="hiq:CGSHiGG_04185"/>
<dbReference type="HOGENOM" id="CLU_099590_0_1_6"/>
<dbReference type="Proteomes" id="UP000001990">
    <property type="component" value="Chromosome"/>
</dbReference>
<dbReference type="Gene3D" id="3.10.450.50">
    <property type="match status" value="1"/>
</dbReference>
<dbReference type="HAMAP" id="MF_00612">
    <property type="entry name" value="UPF0225"/>
    <property type="match status" value="1"/>
</dbReference>
<dbReference type="InterPro" id="IPR032710">
    <property type="entry name" value="NTF2-like_dom_sf"/>
</dbReference>
<dbReference type="InterPro" id="IPR004027">
    <property type="entry name" value="SEC_C_motif"/>
</dbReference>
<dbReference type="InterPro" id="IPR023006">
    <property type="entry name" value="UPF0225"/>
</dbReference>
<dbReference type="InterPro" id="IPR048469">
    <property type="entry name" value="YchJ-like_M"/>
</dbReference>
<dbReference type="NCBIfam" id="NF001213">
    <property type="entry name" value="PRK00183.1"/>
    <property type="match status" value="1"/>
</dbReference>
<dbReference type="NCBIfam" id="NF002486">
    <property type="entry name" value="PRK01752.1"/>
    <property type="match status" value="1"/>
</dbReference>
<dbReference type="PANTHER" id="PTHR33747:SF1">
    <property type="entry name" value="ADENYLATE CYCLASE-ASSOCIATED CAP C-TERMINAL DOMAIN-CONTAINING PROTEIN"/>
    <property type="match status" value="1"/>
</dbReference>
<dbReference type="PANTHER" id="PTHR33747">
    <property type="entry name" value="UPF0225 PROTEIN SCO1677"/>
    <property type="match status" value="1"/>
</dbReference>
<dbReference type="Pfam" id="PF02810">
    <property type="entry name" value="SEC-C"/>
    <property type="match status" value="1"/>
</dbReference>
<dbReference type="Pfam" id="PF17775">
    <property type="entry name" value="YchJ_M-like"/>
    <property type="match status" value="1"/>
</dbReference>
<dbReference type="SUPFAM" id="SSF54427">
    <property type="entry name" value="NTF2-like"/>
    <property type="match status" value="1"/>
</dbReference>
<dbReference type="SUPFAM" id="SSF103642">
    <property type="entry name" value="Sec-C motif"/>
    <property type="match status" value="1"/>
</dbReference>
<feature type="chain" id="PRO_1000056728" description="UPF0225 protein CGSHiGG_04185">
    <location>
        <begin position="1"/>
        <end position="160"/>
    </location>
</feature>
<comment type="similarity">
    <text evidence="1">Belongs to the UPF0225 family.</text>
</comment>
<protein>
    <recommendedName>
        <fullName evidence="1">UPF0225 protein CGSHiGG_04185</fullName>
    </recommendedName>
</protein>
<name>Y4185_HAEIG</name>
<proteinExistence type="inferred from homology"/>
<reference key="1">
    <citation type="journal article" date="2007" name="Genome Biol.">
        <title>Characterization and modeling of the Haemophilus influenzae core and supragenomes based on the complete genomic sequences of Rd and 12 clinical nontypeable strains.</title>
        <authorList>
            <person name="Hogg J.S."/>
            <person name="Hu F.Z."/>
            <person name="Janto B."/>
            <person name="Boissy R."/>
            <person name="Hayes J."/>
            <person name="Keefe R."/>
            <person name="Post J.C."/>
            <person name="Ehrlich G.D."/>
        </authorList>
    </citation>
    <scope>NUCLEOTIDE SEQUENCE [LARGE SCALE GENOMIC DNA]</scope>
    <source>
        <strain>PittGG</strain>
    </source>
</reference>
<sequence length="160" mass="18260">MSEISTALSEDCPCQSSHHYADCCGKFHLRQAFPETAEQLMRSRYTAYVLKNIPYIVVTTVPSQQTLLKPRLLQEWADNTTWLGLEILKTESLTKTQSAVEFKAIFQGEECEQAHQERSIFVKIEDRWYFVDPTVSLPTMKQPCVCGSGKKFKHCCGGFL</sequence>
<organism>
    <name type="scientific">Haemophilus influenzae (strain PittGG)</name>
    <dbReference type="NCBI Taxonomy" id="374931"/>
    <lineage>
        <taxon>Bacteria</taxon>
        <taxon>Pseudomonadati</taxon>
        <taxon>Pseudomonadota</taxon>
        <taxon>Gammaproteobacteria</taxon>
        <taxon>Pasteurellales</taxon>
        <taxon>Pasteurellaceae</taxon>
        <taxon>Haemophilus</taxon>
    </lineage>
</organism>
<evidence type="ECO:0000255" key="1">
    <source>
        <dbReference type="HAMAP-Rule" id="MF_00612"/>
    </source>
</evidence>
<gene>
    <name type="ordered locus">CGSHiGG_04185</name>
</gene>